<gene>
    <name evidence="1" type="primary">astC</name>
    <name evidence="1" type="synonym">argM</name>
    <name type="ordered locus">SG1813</name>
</gene>
<evidence type="ECO:0000255" key="1">
    <source>
        <dbReference type="HAMAP-Rule" id="MF_01173"/>
    </source>
</evidence>
<name>ASTC_SALG2</name>
<sequence length="408" mass="43754">MSLSVTRENFDEWMVPVYVPAPFIPVRGEGSRLWDQQGKEYIDFAGGIAVNALGHAHPALREALNEQANRFWHTGNGYTNEPALRLAKKLIDATFAERVFFCNSGAEANEAALKLARKYAHDRVGNHKSGIVAFKNAFHGRTLFTVSAGGQPTYSQDFAPLPPDIRHAAYNDLNSASALIDDNTCAVIVEPVQGEGGVIPATKAFLQGLRELCDRHQALLIFDEVQTGVGRTGELYAYMHYGVTPDILTTAKALGGGFPIGAMLTTQDYASVMTPGTHGTTYGGNPLATAVAGKVLDIINTPEMQNGVRQRHDAFIERLNTINARFGMFSEIRGLGLLLGCVLQTEFAGKAKLIAQEAAKAGVMVLIAGGDVVRFAPALNVSDEEIATGLDRFALACERLQTGGASCG</sequence>
<comment type="function">
    <text evidence="1">Catalyzes the transamination of N(2)-succinylornithine and alpha-ketoglutarate into N(2)-succinylglutamate semialdehyde and glutamate. Can also act as an acetylornithine aminotransferase.</text>
</comment>
<comment type="catalytic activity">
    <reaction evidence="1">
        <text>N(2)-succinyl-L-ornithine + 2-oxoglutarate = N-succinyl-L-glutamate 5-semialdehyde + L-glutamate</text>
        <dbReference type="Rhea" id="RHEA:16953"/>
        <dbReference type="ChEBI" id="CHEBI:16810"/>
        <dbReference type="ChEBI" id="CHEBI:29985"/>
        <dbReference type="ChEBI" id="CHEBI:58514"/>
        <dbReference type="ChEBI" id="CHEBI:58520"/>
        <dbReference type="EC" id="2.6.1.81"/>
    </reaction>
</comment>
<comment type="cofactor">
    <cofactor evidence="1">
        <name>pyridoxal 5'-phosphate</name>
        <dbReference type="ChEBI" id="CHEBI:597326"/>
    </cofactor>
</comment>
<comment type="pathway">
    <text evidence="1">Amino-acid degradation; L-arginine degradation via AST pathway; L-glutamate and succinate from L-arginine: step 3/5.</text>
</comment>
<comment type="similarity">
    <text evidence="1">Belongs to the class-III pyridoxal-phosphate-dependent aminotransferase family. AstC subfamily.</text>
</comment>
<protein>
    <recommendedName>
        <fullName evidence="1">Succinylornithine transaminase</fullName>
        <ecNumber evidence="1">2.6.1.81</ecNumber>
    </recommendedName>
    <alternativeName>
        <fullName evidence="1">Succinylornithine aminotransferase</fullName>
    </alternativeName>
</protein>
<organism>
    <name type="scientific">Salmonella gallinarum (strain 287/91 / NCTC 13346)</name>
    <dbReference type="NCBI Taxonomy" id="550538"/>
    <lineage>
        <taxon>Bacteria</taxon>
        <taxon>Pseudomonadati</taxon>
        <taxon>Pseudomonadota</taxon>
        <taxon>Gammaproteobacteria</taxon>
        <taxon>Enterobacterales</taxon>
        <taxon>Enterobacteriaceae</taxon>
        <taxon>Salmonella</taxon>
    </lineage>
</organism>
<reference key="1">
    <citation type="journal article" date="2008" name="Genome Res.">
        <title>Comparative genome analysis of Salmonella enteritidis PT4 and Salmonella gallinarum 287/91 provides insights into evolutionary and host adaptation pathways.</title>
        <authorList>
            <person name="Thomson N.R."/>
            <person name="Clayton D.J."/>
            <person name="Windhorst D."/>
            <person name="Vernikos G."/>
            <person name="Davidson S."/>
            <person name="Churcher C."/>
            <person name="Quail M.A."/>
            <person name="Stevens M."/>
            <person name="Jones M.A."/>
            <person name="Watson M."/>
            <person name="Barron A."/>
            <person name="Layton A."/>
            <person name="Pickard D."/>
            <person name="Kingsley R.A."/>
            <person name="Bignell A."/>
            <person name="Clark L."/>
            <person name="Harris B."/>
            <person name="Ormond D."/>
            <person name="Abdellah Z."/>
            <person name="Brooks K."/>
            <person name="Cherevach I."/>
            <person name="Chillingworth T."/>
            <person name="Woodward J."/>
            <person name="Norberczak H."/>
            <person name="Lord A."/>
            <person name="Arrowsmith C."/>
            <person name="Jagels K."/>
            <person name="Moule S."/>
            <person name="Mungall K."/>
            <person name="Saunders M."/>
            <person name="Whitehead S."/>
            <person name="Chabalgoity J.A."/>
            <person name="Maskell D."/>
            <person name="Humphreys T."/>
            <person name="Roberts M."/>
            <person name="Barrow P.A."/>
            <person name="Dougan G."/>
            <person name="Parkhill J."/>
        </authorList>
    </citation>
    <scope>NUCLEOTIDE SEQUENCE [LARGE SCALE GENOMIC DNA]</scope>
    <source>
        <strain>287/91 / NCTC 13346</strain>
    </source>
</reference>
<proteinExistence type="inferred from homology"/>
<keyword id="KW-0032">Aminotransferase</keyword>
<keyword id="KW-0056">Arginine metabolism</keyword>
<keyword id="KW-0663">Pyridoxal phosphate</keyword>
<keyword id="KW-0808">Transferase</keyword>
<feature type="chain" id="PRO_1000164392" description="Succinylornithine transaminase">
    <location>
        <begin position="1"/>
        <end position="408"/>
    </location>
</feature>
<feature type="modified residue" description="N6-(pyridoxal phosphate)lysine" evidence="1">
    <location>
        <position position="252"/>
    </location>
</feature>
<dbReference type="EC" id="2.6.1.81" evidence="1"/>
<dbReference type="EMBL" id="AM933173">
    <property type="protein sequence ID" value="CAR37669.1"/>
    <property type="molecule type" value="Genomic_DNA"/>
</dbReference>
<dbReference type="RefSeq" id="WP_000059503.1">
    <property type="nucleotide sequence ID" value="NC_011274.1"/>
</dbReference>
<dbReference type="SMR" id="B5RB01"/>
<dbReference type="KEGG" id="seg:SG1813"/>
<dbReference type="HOGENOM" id="CLU_016922_10_1_6"/>
<dbReference type="UniPathway" id="UPA00185">
    <property type="reaction ID" value="UER00281"/>
</dbReference>
<dbReference type="Proteomes" id="UP000008321">
    <property type="component" value="Chromosome"/>
</dbReference>
<dbReference type="GO" id="GO:0042802">
    <property type="term" value="F:identical protein binding"/>
    <property type="evidence" value="ECO:0007669"/>
    <property type="project" value="TreeGrafter"/>
</dbReference>
<dbReference type="GO" id="GO:0030170">
    <property type="term" value="F:pyridoxal phosphate binding"/>
    <property type="evidence" value="ECO:0007669"/>
    <property type="project" value="UniProtKB-UniRule"/>
</dbReference>
<dbReference type="GO" id="GO:0043825">
    <property type="term" value="F:succinylornithine transaminase activity"/>
    <property type="evidence" value="ECO:0007669"/>
    <property type="project" value="UniProtKB-EC"/>
</dbReference>
<dbReference type="GO" id="GO:1901607">
    <property type="term" value="P:alpha-amino acid biosynthetic process"/>
    <property type="evidence" value="ECO:0007669"/>
    <property type="project" value="UniProtKB-ARBA"/>
</dbReference>
<dbReference type="GO" id="GO:0019544">
    <property type="term" value="P:arginine catabolic process to glutamate"/>
    <property type="evidence" value="ECO:0007669"/>
    <property type="project" value="UniProtKB-UniRule"/>
</dbReference>
<dbReference type="GO" id="GO:0019545">
    <property type="term" value="P:arginine catabolic process to succinate"/>
    <property type="evidence" value="ECO:0007669"/>
    <property type="project" value="UniProtKB-UniRule"/>
</dbReference>
<dbReference type="GO" id="GO:0006593">
    <property type="term" value="P:ornithine catabolic process"/>
    <property type="evidence" value="ECO:0007669"/>
    <property type="project" value="InterPro"/>
</dbReference>
<dbReference type="CDD" id="cd00610">
    <property type="entry name" value="OAT_like"/>
    <property type="match status" value="1"/>
</dbReference>
<dbReference type="FunFam" id="3.40.640.10:FF:000004">
    <property type="entry name" value="Acetylornithine aminotransferase"/>
    <property type="match status" value="1"/>
</dbReference>
<dbReference type="Gene3D" id="3.90.1150.10">
    <property type="entry name" value="Aspartate Aminotransferase, domain 1"/>
    <property type="match status" value="1"/>
</dbReference>
<dbReference type="Gene3D" id="3.40.640.10">
    <property type="entry name" value="Type I PLP-dependent aspartate aminotransferase-like (Major domain)"/>
    <property type="match status" value="1"/>
</dbReference>
<dbReference type="HAMAP" id="MF_01107">
    <property type="entry name" value="ArgD_aminotrans_3"/>
    <property type="match status" value="1"/>
</dbReference>
<dbReference type="HAMAP" id="MF_01173">
    <property type="entry name" value="AstC_aminotrans_3"/>
    <property type="match status" value="1"/>
</dbReference>
<dbReference type="InterPro" id="IPR017652">
    <property type="entry name" value="Ac/SucOrn_transaminase_bac"/>
</dbReference>
<dbReference type="InterPro" id="IPR004636">
    <property type="entry name" value="AcOrn/SuccOrn_fam"/>
</dbReference>
<dbReference type="InterPro" id="IPR005814">
    <property type="entry name" value="Aminotrans_3"/>
</dbReference>
<dbReference type="InterPro" id="IPR049704">
    <property type="entry name" value="Aminotrans_3_PPA_site"/>
</dbReference>
<dbReference type="InterPro" id="IPR050103">
    <property type="entry name" value="Class-III_PLP-dep_AT"/>
</dbReference>
<dbReference type="InterPro" id="IPR015424">
    <property type="entry name" value="PyrdxlP-dep_Trfase"/>
</dbReference>
<dbReference type="InterPro" id="IPR015421">
    <property type="entry name" value="PyrdxlP-dep_Trfase_major"/>
</dbReference>
<dbReference type="InterPro" id="IPR015422">
    <property type="entry name" value="PyrdxlP-dep_Trfase_small"/>
</dbReference>
<dbReference type="InterPro" id="IPR001763">
    <property type="entry name" value="Rhodanese-like_dom"/>
</dbReference>
<dbReference type="InterPro" id="IPR026330">
    <property type="entry name" value="SOAT"/>
</dbReference>
<dbReference type="NCBIfam" id="TIGR03246">
    <property type="entry name" value="arg_catab_astC"/>
    <property type="match status" value="1"/>
</dbReference>
<dbReference type="NCBIfam" id="TIGR00707">
    <property type="entry name" value="argD"/>
    <property type="match status" value="1"/>
</dbReference>
<dbReference type="NCBIfam" id="NF002325">
    <property type="entry name" value="PRK01278.1"/>
    <property type="match status" value="1"/>
</dbReference>
<dbReference type="NCBIfam" id="NF003468">
    <property type="entry name" value="PRK05093.1"/>
    <property type="match status" value="1"/>
</dbReference>
<dbReference type="NCBIfam" id="NF009047">
    <property type="entry name" value="PRK12381.1"/>
    <property type="match status" value="1"/>
</dbReference>
<dbReference type="PANTHER" id="PTHR11986">
    <property type="entry name" value="AMINOTRANSFERASE CLASS III"/>
    <property type="match status" value="1"/>
</dbReference>
<dbReference type="PANTHER" id="PTHR11986:SF113">
    <property type="entry name" value="SUCCINYLORNITHINE TRANSAMINASE"/>
    <property type="match status" value="1"/>
</dbReference>
<dbReference type="Pfam" id="PF00202">
    <property type="entry name" value="Aminotran_3"/>
    <property type="match status" value="1"/>
</dbReference>
<dbReference type="PIRSF" id="PIRSF000521">
    <property type="entry name" value="Transaminase_4ab_Lys_Orn"/>
    <property type="match status" value="1"/>
</dbReference>
<dbReference type="SUPFAM" id="SSF53383">
    <property type="entry name" value="PLP-dependent transferases"/>
    <property type="match status" value="1"/>
</dbReference>
<dbReference type="PROSITE" id="PS00600">
    <property type="entry name" value="AA_TRANSFER_CLASS_3"/>
    <property type="match status" value="1"/>
</dbReference>
<accession>B5RB01</accession>